<comment type="function">
    <text evidence="1">Catalyzes a salvage reaction resulting in the formation of AMP, that is energically less costly than de novo synthesis.</text>
</comment>
<comment type="catalytic activity">
    <reaction evidence="1">
        <text>AMP + diphosphate = 5-phospho-alpha-D-ribose 1-diphosphate + adenine</text>
        <dbReference type="Rhea" id="RHEA:16609"/>
        <dbReference type="ChEBI" id="CHEBI:16708"/>
        <dbReference type="ChEBI" id="CHEBI:33019"/>
        <dbReference type="ChEBI" id="CHEBI:58017"/>
        <dbReference type="ChEBI" id="CHEBI:456215"/>
        <dbReference type="EC" id="2.4.2.7"/>
    </reaction>
</comment>
<comment type="pathway">
    <text evidence="1">Purine metabolism; AMP biosynthesis via salvage pathway; AMP from adenine: step 1/1.</text>
</comment>
<comment type="subunit">
    <text evidence="1">Homodimer.</text>
</comment>
<comment type="subcellular location">
    <subcellularLocation>
        <location evidence="1">Cytoplasm</location>
    </subcellularLocation>
</comment>
<comment type="similarity">
    <text evidence="1">Belongs to the purine/pyrimidine phosphoribosyltransferase family.</text>
</comment>
<organism>
    <name type="scientific">Pseudomonas fluorescens (strain Pf0-1)</name>
    <dbReference type="NCBI Taxonomy" id="205922"/>
    <lineage>
        <taxon>Bacteria</taxon>
        <taxon>Pseudomonadati</taxon>
        <taxon>Pseudomonadota</taxon>
        <taxon>Gammaproteobacteria</taxon>
        <taxon>Pseudomonadales</taxon>
        <taxon>Pseudomonadaceae</taxon>
        <taxon>Pseudomonas</taxon>
    </lineage>
</organism>
<accession>Q3KFA3</accession>
<evidence type="ECO:0000255" key="1">
    <source>
        <dbReference type="HAMAP-Rule" id="MF_00004"/>
    </source>
</evidence>
<sequence length="182" mass="19979">MVFDSFDIKSLIRPVIDFPKPGVIFRDITPLFQSPKALRLVMDSFAHRYVEADFTHIGAMDARGFLIGSVLAYQLNKPLVLFRKQGKLPADVLAEGYATEYGEAFLEVHADSLCEGDSVVMFDDLIATGGTLIAAANLIRRMGARVHEAAAIIDLPELGGSQRLEDMGIPTFCLTQFALTDK</sequence>
<dbReference type="EC" id="2.4.2.7" evidence="1"/>
<dbReference type="EMBL" id="CP000094">
    <property type="protein sequence ID" value="ABA73553.1"/>
    <property type="molecule type" value="Genomic_DNA"/>
</dbReference>
<dbReference type="RefSeq" id="WP_003223345.1">
    <property type="nucleotide sequence ID" value="NC_007492.2"/>
</dbReference>
<dbReference type="SMR" id="Q3KFA3"/>
<dbReference type="KEGG" id="pfo:Pfl01_1810"/>
<dbReference type="eggNOG" id="COG0503">
    <property type="taxonomic scope" value="Bacteria"/>
</dbReference>
<dbReference type="HOGENOM" id="CLU_063339_3_0_6"/>
<dbReference type="UniPathway" id="UPA00588">
    <property type="reaction ID" value="UER00646"/>
</dbReference>
<dbReference type="Proteomes" id="UP000002704">
    <property type="component" value="Chromosome"/>
</dbReference>
<dbReference type="GO" id="GO:0005737">
    <property type="term" value="C:cytoplasm"/>
    <property type="evidence" value="ECO:0007669"/>
    <property type="project" value="UniProtKB-SubCell"/>
</dbReference>
<dbReference type="GO" id="GO:0002055">
    <property type="term" value="F:adenine binding"/>
    <property type="evidence" value="ECO:0007669"/>
    <property type="project" value="TreeGrafter"/>
</dbReference>
<dbReference type="GO" id="GO:0003999">
    <property type="term" value="F:adenine phosphoribosyltransferase activity"/>
    <property type="evidence" value="ECO:0007669"/>
    <property type="project" value="UniProtKB-UniRule"/>
</dbReference>
<dbReference type="GO" id="GO:0016208">
    <property type="term" value="F:AMP binding"/>
    <property type="evidence" value="ECO:0007669"/>
    <property type="project" value="TreeGrafter"/>
</dbReference>
<dbReference type="GO" id="GO:0006168">
    <property type="term" value="P:adenine salvage"/>
    <property type="evidence" value="ECO:0007669"/>
    <property type="project" value="InterPro"/>
</dbReference>
<dbReference type="GO" id="GO:0044209">
    <property type="term" value="P:AMP salvage"/>
    <property type="evidence" value="ECO:0007669"/>
    <property type="project" value="UniProtKB-UniRule"/>
</dbReference>
<dbReference type="GO" id="GO:0006166">
    <property type="term" value="P:purine ribonucleoside salvage"/>
    <property type="evidence" value="ECO:0007669"/>
    <property type="project" value="UniProtKB-KW"/>
</dbReference>
<dbReference type="CDD" id="cd06223">
    <property type="entry name" value="PRTases_typeI"/>
    <property type="match status" value="1"/>
</dbReference>
<dbReference type="FunFam" id="3.40.50.2020:FF:000021">
    <property type="entry name" value="Adenine phosphoribosyltransferase"/>
    <property type="match status" value="1"/>
</dbReference>
<dbReference type="Gene3D" id="3.40.50.2020">
    <property type="match status" value="1"/>
</dbReference>
<dbReference type="HAMAP" id="MF_00004">
    <property type="entry name" value="Aden_phosphoribosyltr"/>
    <property type="match status" value="1"/>
</dbReference>
<dbReference type="InterPro" id="IPR005764">
    <property type="entry name" value="Ade_phspho_trans"/>
</dbReference>
<dbReference type="InterPro" id="IPR000836">
    <property type="entry name" value="PRibTrfase_dom"/>
</dbReference>
<dbReference type="InterPro" id="IPR029057">
    <property type="entry name" value="PRTase-like"/>
</dbReference>
<dbReference type="InterPro" id="IPR050054">
    <property type="entry name" value="UPRTase/APRTase"/>
</dbReference>
<dbReference type="NCBIfam" id="TIGR01090">
    <property type="entry name" value="apt"/>
    <property type="match status" value="1"/>
</dbReference>
<dbReference type="NCBIfam" id="NF002634">
    <property type="entry name" value="PRK02304.1-3"/>
    <property type="match status" value="1"/>
</dbReference>
<dbReference type="NCBIfam" id="NF002636">
    <property type="entry name" value="PRK02304.1-5"/>
    <property type="match status" value="1"/>
</dbReference>
<dbReference type="PANTHER" id="PTHR32315">
    <property type="entry name" value="ADENINE PHOSPHORIBOSYLTRANSFERASE"/>
    <property type="match status" value="1"/>
</dbReference>
<dbReference type="PANTHER" id="PTHR32315:SF3">
    <property type="entry name" value="ADENINE PHOSPHORIBOSYLTRANSFERASE"/>
    <property type="match status" value="1"/>
</dbReference>
<dbReference type="Pfam" id="PF00156">
    <property type="entry name" value="Pribosyltran"/>
    <property type="match status" value="1"/>
</dbReference>
<dbReference type="SUPFAM" id="SSF53271">
    <property type="entry name" value="PRTase-like"/>
    <property type="match status" value="1"/>
</dbReference>
<dbReference type="PROSITE" id="PS00103">
    <property type="entry name" value="PUR_PYR_PR_TRANSFER"/>
    <property type="match status" value="1"/>
</dbReference>
<gene>
    <name evidence="1" type="primary">apt</name>
    <name type="ordered locus">Pfl01_1810</name>
</gene>
<name>APT_PSEPF</name>
<proteinExistence type="inferred from homology"/>
<reference key="1">
    <citation type="journal article" date="2009" name="Genome Biol.">
        <title>Genomic and genetic analyses of diversity and plant interactions of Pseudomonas fluorescens.</title>
        <authorList>
            <person name="Silby M.W."/>
            <person name="Cerdeno-Tarraga A.M."/>
            <person name="Vernikos G.S."/>
            <person name="Giddens S.R."/>
            <person name="Jackson R.W."/>
            <person name="Preston G.M."/>
            <person name="Zhang X.-X."/>
            <person name="Moon C.D."/>
            <person name="Gehrig S.M."/>
            <person name="Godfrey S.A.C."/>
            <person name="Knight C.G."/>
            <person name="Malone J.G."/>
            <person name="Robinson Z."/>
            <person name="Spiers A.J."/>
            <person name="Harris S."/>
            <person name="Challis G.L."/>
            <person name="Yaxley A.M."/>
            <person name="Harris D."/>
            <person name="Seeger K."/>
            <person name="Murphy L."/>
            <person name="Rutter S."/>
            <person name="Squares R."/>
            <person name="Quail M.A."/>
            <person name="Saunders E."/>
            <person name="Mavromatis K."/>
            <person name="Brettin T.S."/>
            <person name="Bentley S.D."/>
            <person name="Hothersall J."/>
            <person name="Stephens E."/>
            <person name="Thomas C.M."/>
            <person name="Parkhill J."/>
            <person name="Levy S.B."/>
            <person name="Rainey P.B."/>
            <person name="Thomson N.R."/>
        </authorList>
    </citation>
    <scope>NUCLEOTIDE SEQUENCE [LARGE SCALE GENOMIC DNA]</scope>
    <source>
        <strain>Pf0-1</strain>
    </source>
</reference>
<protein>
    <recommendedName>
        <fullName evidence="1">Adenine phosphoribosyltransferase</fullName>
        <shortName evidence="1">APRT</shortName>
        <ecNumber evidence="1">2.4.2.7</ecNumber>
    </recommendedName>
</protein>
<keyword id="KW-0963">Cytoplasm</keyword>
<keyword id="KW-0328">Glycosyltransferase</keyword>
<keyword id="KW-0660">Purine salvage</keyword>
<keyword id="KW-0808">Transferase</keyword>
<feature type="chain" id="PRO_1000000329" description="Adenine phosphoribosyltransferase">
    <location>
        <begin position="1"/>
        <end position="182"/>
    </location>
</feature>